<reference key="1">
    <citation type="journal article" date="2007" name="J. Bacteriol.">
        <title>The genome sequence of avian pathogenic Escherichia coli strain O1:K1:H7 shares strong similarities with human extraintestinal pathogenic E. coli genomes.</title>
        <authorList>
            <person name="Johnson T.J."/>
            <person name="Kariyawasam S."/>
            <person name="Wannemuehler Y."/>
            <person name="Mangiamele P."/>
            <person name="Johnson S.J."/>
            <person name="Doetkott C."/>
            <person name="Skyberg J.A."/>
            <person name="Lynne A.M."/>
            <person name="Johnson J.R."/>
            <person name="Nolan L.K."/>
        </authorList>
    </citation>
    <scope>NUCLEOTIDE SEQUENCE [LARGE SCALE GENOMIC DNA]</scope>
</reference>
<gene>
    <name evidence="1" type="primary">nanM</name>
    <name type="ordered locus">Ecok1_43220</name>
    <name type="ORF">APECO1_2121</name>
</gene>
<organism>
    <name type="scientific">Escherichia coli O1:K1 / APEC</name>
    <dbReference type="NCBI Taxonomy" id="405955"/>
    <lineage>
        <taxon>Bacteria</taxon>
        <taxon>Pseudomonadati</taxon>
        <taxon>Pseudomonadota</taxon>
        <taxon>Gammaproteobacteria</taxon>
        <taxon>Enterobacterales</taxon>
        <taxon>Enterobacteriaceae</taxon>
        <taxon>Escherichia</taxon>
    </lineage>
</organism>
<keyword id="KW-0119">Carbohydrate metabolism</keyword>
<keyword id="KW-0413">Isomerase</keyword>
<keyword id="KW-0880">Kelch repeat</keyword>
<keyword id="KW-0574">Periplasm</keyword>
<keyword id="KW-1185">Reference proteome</keyword>
<keyword id="KW-0677">Repeat</keyword>
<keyword id="KW-0732">Signal</keyword>
<evidence type="ECO:0000255" key="1">
    <source>
        <dbReference type="HAMAP-Rule" id="MF_01195"/>
    </source>
</evidence>
<evidence type="ECO:0000305" key="2"/>
<accession>A1AJH6</accession>
<dbReference type="EC" id="5.1.3.24" evidence="1"/>
<dbReference type="EMBL" id="CP000468">
    <property type="protein sequence ID" value="ABJ03816.1"/>
    <property type="status" value="ALT_INIT"/>
    <property type="molecule type" value="Genomic_DNA"/>
</dbReference>
<dbReference type="RefSeq" id="WP_001298082.1">
    <property type="nucleotide sequence ID" value="NZ_CADILS010000108.1"/>
</dbReference>
<dbReference type="SMR" id="A1AJH6"/>
<dbReference type="KEGG" id="ecv:APECO1_2121"/>
<dbReference type="HOGENOM" id="CLU_061535_0_0_6"/>
<dbReference type="Proteomes" id="UP000008216">
    <property type="component" value="Chromosome"/>
</dbReference>
<dbReference type="GO" id="GO:0042597">
    <property type="term" value="C:periplasmic space"/>
    <property type="evidence" value="ECO:0007669"/>
    <property type="project" value="UniProtKB-SubCell"/>
</dbReference>
<dbReference type="GO" id="GO:0016857">
    <property type="term" value="F:racemase and epimerase activity, acting on carbohydrates and derivatives"/>
    <property type="evidence" value="ECO:0007669"/>
    <property type="project" value="UniProtKB-UniRule"/>
</dbReference>
<dbReference type="FunFam" id="2.120.10.80:FF:000061">
    <property type="entry name" value="N-acetylneuraminate epimerase"/>
    <property type="match status" value="1"/>
</dbReference>
<dbReference type="FunFam" id="2.120.10.80:FF:000067">
    <property type="entry name" value="N-acetylneuraminate epimerase"/>
    <property type="match status" value="1"/>
</dbReference>
<dbReference type="Gene3D" id="2.120.10.80">
    <property type="entry name" value="Kelch-type beta propeller"/>
    <property type="match status" value="2"/>
</dbReference>
<dbReference type="HAMAP" id="MF_01195">
    <property type="entry name" value="NanM"/>
    <property type="match status" value="1"/>
</dbReference>
<dbReference type="InterPro" id="IPR015915">
    <property type="entry name" value="Kelch-typ_b-propeller"/>
</dbReference>
<dbReference type="InterPro" id="IPR056734">
    <property type="entry name" value="NANM"/>
</dbReference>
<dbReference type="InterPro" id="IPR019936">
    <property type="entry name" value="NanM_proteobact"/>
</dbReference>
<dbReference type="NCBIfam" id="TIGR03547">
    <property type="entry name" value="muta_rot_YjhT"/>
    <property type="match status" value="1"/>
</dbReference>
<dbReference type="NCBIfam" id="NF010730">
    <property type="entry name" value="PRK14131.1"/>
    <property type="match status" value="1"/>
</dbReference>
<dbReference type="PANTHER" id="PTHR45632">
    <property type="entry name" value="LD33804P"/>
    <property type="match status" value="1"/>
</dbReference>
<dbReference type="Pfam" id="PF24996">
    <property type="entry name" value="NANM"/>
    <property type="match status" value="1"/>
</dbReference>
<dbReference type="SUPFAM" id="SSF117281">
    <property type="entry name" value="Kelch motif"/>
    <property type="match status" value="1"/>
</dbReference>
<feature type="signal peptide" evidence="1">
    <location>
        <begin position="1"/>
        <end position="19"/>
    </location>
</feature>
<feature type="chain" id="PRO_0000333056" description="N-acetylneuraminate epimerase">
    <location>
        <begin position="20"/>
        <end position="368"/>
    </location>
</feature>
<feature type="repeat" description="Kelch 1">
    <location>
        <begin position="40"/>
        <end position="84"/>
    </location>
</feature>
<feature type="repeat" description="Kelch 2">
    <location>
        <begin position="86"/>
        <end position="137"/>
    </location>
</feature>
<feature type="repeat" description="Kelch 3">
    <location>
        <begin position="139"/>
        <end position="173"/>
    </location>
</feature>
<feature type="repeat" description="Kelch 4">
    <location>
        <begin position="174"/>
        <end position="219"/>
    </location>
</feature>
<feature type="repeat" description="Kelch 5">
    <location>
        <begin position="222"/>
        <end position="265"/>
    </location>
</feature>
<feature type="repeat" description="Kelch 6">
    <location>
        <begin position="287"/>
        <end position="336"/>
    </location>
</feature>
<feature type="repeat" description="Kelch 7">
    <location>
        <begin position="338"/>
        <end position="367"/>
    </location>
</feature>
<feature type="active site" description="Proton acceptor" evidence="1">
    <location>
        <position position="228"/>
    </location>
</feature>
<proteinExistence type="inferred from homology"/>
<name>NANM_ECOK1</name>
<comment type="function">
    <text evidence="1">Converts alpha-N-acetylneuranimic acid (Neu5Ac) to the beta-anomer, accelerating the equilibrium between the alpha- and beta-anomers. Probably facilitates sialidase-negative bacteria to compete successfully for limited amounts of extracellular Neu5Ac, which is likely taken up in the beta-anomer. In addition, the rapid removal of sialic acid from solution might be advantageous to the bacterium to damp down host responses.</text>
</comment>
<comment type="catalytic activity">
    <reaction evidence="1">
        <text>N-acetyl-alpha-neuraminate = N-acetyl-beta-neuraminate</text>
        <dbReference type="Rhea" id="RHEA:25233"/>
        <dbReference type="ChEBI" id="CHEBI:58705"/>
        <dbReference type="ChEBI" id="CHEBI:58770"/>
        <dbReference type="EC" id="5.1.3.24"/>
    </reaction>
</comment>
<comment type="subunit">
    <text evidence="1">Homodimer.</text>
</comment>
<comment type="subcellular location">
    <subcellularLocation>
        <location evidence="1">Periplasm</location>
    </subcellularLocation>
</comment>
<comment type="similarity">
    <text evidence="1">Belongs to the NanM family.</text>
</comment>
<comment type="sequence caution" evidence="2">
    <conflict type="erroneous initiation">
        <sequence resource="EMBL-CDS" id="ABJ03816"/>
    </conflict>
</comment>
<protein>
    <recommendedName>
        <fullName evidence="1">N-acetylneuraminate epimerase</fullName>
        <ecNumber evidence="1">5.1.3.24</ecNumber>
    </recommendedName>
    <alternativeName>
        <fullName evidence="1">N-acetylneuraminate mutarotase</fullName>
        <shortName evidence="1">Neu5Ac mutarotase</shortName>
    </alternativeName>
    <alternativeName>
        <fullName evidence="1">Sialic acid epimerase</fullName>
    </alternativeName>
</protein>
<sequence length="368" mass="39602">MNKTITALTIIMASFATNASVLPETPVPFKSGTGAIDNDTVYIGLGSAGTAWYKLDTQAKDKKWTALAAFPGGPRDQATSAFIDGNLYVFGGIGKNSEGLTQVFNDVHKYNPKTNSWVKLMSHAPMGMAGHVTFVHNGKAYVTGGVNQNIFNGYFEDLNEAGKDSTTIDKINAHYFDKKAEDYFFNKFLLSFDPSTQQWSYAGESPWYGTAGAAVVNKGDKTWLINGEAKPGLRTDAVFELDFTGNNLKWNKLAPVASPDGVAGGFAGMSNDSLIFAGGAGFKGSRENYQNGKNYAHEGLKKSYSADIHLWHNGKWDKSGELSQGRAYGVSLPWNNSLLIIGGETAGGKAVTDSVLISVKDNKVTVQN</sequence>